<accession>Q6Y306</accession>
<accession>Q6Y305</accession>
<reference key="1">
    <citation type="submission" date="2002-11" db="EMBL/GenBank/DDBJ databases">
        <authorList>
            <person name="Shimizu H."/>
            <person name="Ishikawa T."/>
        </authorList>
    </citation>
    <scope>NUCLEOTIDE SEQUENCE [MRNA] (ISOFORMS 1 AND 2)</scope>
    <source>
        <strain>Sprague-Dawley</strain>
        <tissue>Testis</tissue>
    </source>
</reference>
<reference key="2">
    <citation type="journal article" date="2007" name="Biochem. J.">
        <title>Multidrug resistance-associated protein 9 (ABCC12) is present in mouse and boar sperm.</title>
        <authorList>
            <person name="Ono N."/>
            <person name="Van der Heijden I."/>
            <person name="Scheffer G.L."/>
            <person name="Van de Wetering K."/>
            <person name="Van Deemter E."/>
            <person name="De Haas M."/>
            <person name="Boerke A."/>
            <person name="Gadella B.M."/>
            <person name="De Rooij D.G."/>
            <person name="Neefjes J.J."/>
            <person name="Groothuis T.A."/>
            <person name="Oomen L."/>
            <person name="Brocks L."/>
            <person name="Ishikawa T."/>
            <person name="Borst P."/>
        </authorList>
    </citation>
    <scope>TISSUE SPECIFICITY</scope>
</reference>
<name>MRP9_RAT</name>
<proteinExistence type="evidence at transcript level"/>
<protein>
    <recommendedName>
        <fullName>ATP-binding cassette sub-family C member 12</fullName>
    </recommendedName>
    <alternativeName>
        <fullName>Multidrug resistance-associated protein 9</fullName>
    </alternativeName>
</protein>
<feature type="chain" id="PRO_0000253580" description="ATP-binding cassette sub-family C member 12">
    <location>
        <begin position="1"/>
        <end position="1366"/>
    </location>
</feature>
<feature type="transmembrane region" description="Helical" evidence="5">
    <location>
        <begin position="125"/>
        <end position="145"/>
    </location>
</feature>
<feature type="transmembrane region" description="Helical" evidence="5">
    <location>
        <begin position="160"/>
        <end position="180"/>
    </location>
</feature>
<feature type="transmembrane region" description="Helical" evidence="5">
    <location>
        <begin position="235"/>
        <end position="255"/>
    </location>
</feature>
<feature type="transmembrane region" description="Helical" evidence="5">
    <location>
        <begin position="257"/>
        <end position="277"/>
    </location>
</feature>
<feature type="transmembrane region" description="Helical" evidence="5">
    <location>
        <begin position="349"/>
        <end position="369"/>
    </location>
</feature>
<feature type="transmembrane region" description="Helical" evidence="5">
    <location>
        <begin position="377"/>
        <end position="397"/>
    </location>
</feature>
<feature type="transmembrane region" description="Helical" evidence="5">
    <location>
        <begin position="788"/>
        <end position="808"/>
    </location>
</feature>
<feature type="transmembrane region" description="Helical" evidence="5">
    <location>
        <begin position="850"/>
        <end position="870"/>
    </location>
</feature>
<feature type="transmembrane region" description="Helical" evidence="5">
    <location>
        <begin position="943"/>
        <end position="963"/>
    </location>
</feature>
<feature type="transmembrane region" description="Helical" evidence="5">
    <location>
        <begin position="1038"/>
        <end position="1058"/>
    </location>
</feature>
<feature type="domain" description="ABC transmembrane type-1 1" evidence="5">
    <location>
        <begin position="123"/>
        <end position="404"/>
    </location>
</feature>
<feature type="domain" description="ABC transporter 1" evidence="4">
    <location>
        <begin position="478"/>
        <end position="702"/>
    </location>
</feature>
<feature type="domain" description="ABC transmembrane type-1 2" evidence="5">
    <location>
        <begin position="792"/>
        <end position="1089"/>
    </location>
</feature>
<feature type="domain" description="ABC transporter 2" evidence="4">
    <location>
        <begin position="1127"/>
        <end position="1361"/>
    </location>
</feature>
<feature type="region of interest" description="Disordered" evidence="6">
    <location>
        <begin position="472"/>
        <end position="494"/>
    </location>
</feature>
<feature type="region of interest" description="Disordered" evidence="6">
    <location>
        <begin position="729"/>
        <end position="751"/>
    </location>
</feature>
<feature type="compositionally biased region" description="Polar residues" evidence="6">
    <location>
        <begin position="474"/>
        <end position="493"/>
    </location>
</feature>
<feature type="compositionally biased region" description="Basic and acidic residues" evidence="6">
    <location>
        <begin position="729"/>
        <end position="748"/>
    </location>
</feature>
<feature type="binding site" evidence="4">
    <location>
        <begin position="514"/>
        <end position="521"/>
    </location>
    <ligand>
        <name>ATP</name>
        <dbReference type="ChEBI" id="CHEBI:30616"/>
        <label>1</label>
    </ligand>
</feature>
<feature type="binding site" evidence="4">
    <location>
        <begin position="1161"/>
        <end position="1168"/>
    </location>
    <ligand>
        <name>ATP</name>
        <dbReference type="ChEBI" id="CHEBI:30616"/>
        <label>2</label>
    </ligand>
</feature>
<feature type="glycosylation site" description="N-linked (GlcNAc...) asparagine" evidence="3">
    <location>
        <position position="439"/>
    </location>
</feature>
<feature type="glycosylation site" description="N-linked (GlcNAc...) asparagine" evidence="3">
    <location>
        <position position="837"/>
    </location>
</feature>
<feature type="glycosylation site" description="N-linked (GlcNAc...) asparagine" evidence="3">
    <location>
        <position position="978"/>
    </location>
</feature>
<feature type="splice variant" id="VSP_021099" description="In isoform 2." evidence="8">
    <location>
        <begin position="142"/>
        <end position="220"/>
    </location>
</feature>
<dbReference type="EMBL" id="AY188179">
    <property type="protein sequence ID" value="AAO74586.1"/>
    <property type="molecule type" value="mRNA"/>
</dbReference>
<dbReference type="EMBL" id="AY188180">
    <property type="protein sequence ID" value="AAO74587.1"/>
    <property type="molecule type" value="mRNA"/>
</dbReference>
<dbReference type="RefSeq" id="NP_955409.1">
    <molecule id="Q6Y306-1"/>
    <property type="nucleotide sequence ID" value="NM_199377.1"/>
</dbReference>
<dbReference type="SMR" id="Q6Y306"/>
<dbReference type="FunCoup" id="Q6Y306">
    <property type="interactions" value="81"/>
</dbReference>
<dbReference type="STRING" id="10116.ENSRNOP00000021095"/>
<dbReference type="GlyCosmos" id="Q6Y306">
    <property type="glycosylation" value="3 sites, No reported glycans"/>
</dbReference>
<dbReference type="GlyGen" id="Q6Y306">
    <property type="glycosylation" value="3 sites"/>
</dbReference>
<dbReference type="iPTMnet" id="Q6Y306"/>
<dbReference type="PhosphoSitePlus" id="Q6Y306"/>
<dbReference type="PaxDb" id="10116-ENSRNOP00000021095"/>
<dbReference type="GeneID" id="291923"/>
<dbReference type="KEGG" id="rno:291923"/>
<dbReference type="AGR" id="RGD:735100"/>
<dbReference type="CTD" id="94160"/>
<dbReference type="RGD" id="735100">
    <property type="gene designation" value="Abcc12"/>
</dbReference>
<dbReference type="eggNOG" id="KOG0054">
    <property type="taxonomic scope" value="Eukaryota"/>
</dbReference>
<dbReference type="InParanoid" id="Q6Y306"/>
<dbReference type="PhylomeDB" id="Q6Y306"/>
<dbReference type="PRO" id="PR:Q6Y306"/>
<dbReference type="Proteomes" id="UP000002494">
    <property type="component" value="Unplaced"/>
</dbReference>
<dbReference type="GO" id="GO:0005783">
    <property type="term" value="C:endoplasmic reticulum"/>
    <property type="evidence" value="ECO:0000250"/>
    <property type="project" value="UniProtKB"/>
</dbReference>
<dbReference type="GO" id="GO:0005789">
    <property type="term" value="C:endoplasmic reticulum membrane"/>
    <property type="evidence" value="ECO:0007669"/>
    <property type="project" value="UniProtKB-SubCell"/>
</dbReference>
<dbReference type="GO" id="GO:0016020">
    <property type="term" value="C:membrane"/>
    <property type="evidence" value="ECO:0000318"/>
    <property type="project" value="GO_Central"/>
</dbReference>
<dbReference type="GO" id="GO:0005886">
    <property type="term" value="C:plasma membrane"/>
    <property type="evidence" value="ECO:0007669"/>
    <property type="project" value="UniProtKB-ARBA"/>
</dbReference>
<dbReference type="GO" id="GO:0140359">
    <property type="term" value="F:ABC-type transporter activity"/>
    <property type="evidence" value="ECO:0007669"/>
    <property type="project" value="InterPro"/>
</dbReference>
<dbReference type="GO" id="GO:0005524">
    <property type="term" value="F:ATP binding"/>
    <property type="evidence" value="ECO:0007669"/>
    <property type="project" value="UniProtKB-KW"/>
</dbReference>
<dbReference type="GO" id="GO:0016887">
    <property type="term" value="F:ATP hydrolysis activity"/>
    <property type="evidence" value="ECO:0007669"/>
    <property type="project" value="InterPro"/>
</dbReference>
<dbReference type="GO" id="GO:0042626">
    <property type="term" value="F:ATPase-coupled transmembrane transporter activity"/>
    <property type="evidence" value="ECO:0000318"/>
    <property type="project" value="GO_Central"/>
</dbReference>
<dbReference type="GO" id="GO:0055085">
    <property type="term" value="P:transmembrane transport"/>
    <property type="evidence" value="ECO:0000318"/>
    <property type="project" value="GO_Central"/>
</dbReference>
<dbReference type="CDD" id="cd18592">
    <property type="entry name" value="ABC_6TM_MRP5_8_9_D1"/>
    <property type="match status" value="1"/>
</dbReference>
<dbReference type="CDD" id="cd18599">
    <property type="entry name" value="ABC_6TM_MRP5_8_9_D2"/>
    <property type="match status" value="1"/>
</dbReference>
<dbReference type="CDD" id="cd03250">
    <property type="entry name" value="ABCC_MRP_domain1"/>
    <property type="match status" value="1"/>
</dbReference>
<dbReference type="CDD" id="cd03244">
    <property type="entry name" value="ABCC_MRP_domain2"/>
    <property type="match status" value="1"/>
</dbReference>
<dbReference type="FunFam" id="1.20.1560.10:FF:000012">
    <property type="entry name" value="ATP binding cassette subfamily C member 5"/>
    <property type="match status" value="1"/>
</dbReference>
<dbReference type="FunFam" id="3.40.50.300:FF:001128">
    <property type="entry name" value="ATP-binding cassette sub-family C member 12"/>
    <property type="match status" value="1"/>
</dbReference>
<dbReference type="FunFam" id="3.40.50.300:FF:000074">
    <property type="entry name" value="Multidrug resistance-associated protein 5 isoform 1"/>
    <property type="match status" value="1"/>
</dbReference>
<dbReference type="FunFam" id="1.20.1560.10:FF:000015">
    <property type="entry name" value="multidrug resistance-associated protein 5 isoform X1"/>
    <property type="match status" value="1"/>
</dbReference>
<dbReference type="Gene3D" id="1.20.1560.10">
    <property type="entry name" value="ABC transporter type 1, transmembrane domain"/>
    <property type="match status" value="2"/>
</dbReference>
<dbReference type="Gene3D" id="3.40.50.300">
    <property type="entry name" value="P-loop containing nucleotide triphosphate hydrolases"/>
    <property type="match status" value="2"/>
</dbReference>
<dbReference type="InterPro" id="IPR003593">
    <property type="entry name" value="AAA+_ATPase"/>
</dbReference>
<dbReference type="InterPro" id="IPR011527">
    <property type="entry name" value="ABC1_TM_dom"/>
</dbReference>
<dbReference type="InterPro" id="IPR036640">
    <property type="entry name" value="ABC1_TM_sf"/>
</dbReference>
<dbReference type="InterPro" id="IPR003439">
    <property type="entry name" value="ABC_transporter-like_ATP-bd"/>
</dbReference>
<dbReference type="InterPro" id="IPR017871">
    <property type="entry name" value="ABC_transporter-like_CS"/>
</dbReference>
<dbReference type="InterPro" id="IPR050173">
    <property type="entry name" value="ABC_transporter_C-like"/>
</dbReference>
<dbReference type="InterPro" id="IPR027417">
    <property type="entry name" value="P-loop_NTPase"/>
</dbReference>
<dbReference type="PANTHER" id="PTHR24223">
    <property type="entry name" value="ATP-BINDING CASSETTE SUB-FAMILY C"/>
    <property type="match status" value="1"/>
</dbReference>
<dbReference type="PANTHER" id="PTHR24223:SF10">
    <property type="entry name" value="ATP-BINDING CASSETTE SUB-FAMILY C MEMBER 12"/>
    <property type="match status" value="1"/>
</dbReference>
<dbReference type="Pfam" id="PF00664">
    <property type="entry name" value="ABC_membrane"/>
    <property type="match status" value="2"/>
</dbReference>
<dbReference type="Pfam" id="PF00005">
    <property type="entry name" value="ABC_tran"/>
    <property type="match status" value="2"/>
</dbReference>
<dbReference type="SMART" id="SM00382">
    <property type="entry name" value="AAA"/>
    <property type="match status" value="2"/>
</dbReference>
<dbReference type="SUPFAM" id="SSF90123">
    <property type="entry name" value="ABC transporter transmembrane region"/>
    <property type="match status" value="2"/>
</dbReference>
<dbReference type="SUPFAM" id="SSF52540">
    <property type="entry name" value="P-loop containing nucleoside triphosphate hydrolases"/>
    <property type="match status" value="2"/>
</dbReference>
<dbReference type="PROSITE" id="PS50929">
    <property type="entry name" value="ABC_TM1F"/>
    <property type="match status" value="2"/>
</dbReference>
<dbReference type="PROSITE" id="PS00211">
    <property type="entry name" value="ABC_TRANSPORTER_1"/>
    <property type="match status" value="2"/>
</dbReference>
<dbReference type="PROSITE" id="PS50893">
    <property type="entry name" value="ABC_TRANSPORTER_2"/>
    <property type="match status" value="2"/>
</dbReference>
<sequence>MVGEDPYLISDLDRRGRRRSFAERYDPSLKTMIPMRPYARLAPNPVDDAGLLSFATFSWLTPVMIRSYKHTLTVDTLPPLSPYDSSDVNAKRLQILWDEEIERVGPERASLGRVVWKFQRTRVLMDVVANILCIIMAALGPTVLIHQILQHVTNISSGHIGISICLCLALFATEFTKVLFRALAWAINYRTAIRLKVALSTLIFKNLLSFKTLTHISAGEVLNVLSSDSYSLFEAALFCPLPATIPILMVVCAVYAFFILGSTALVGICVYLIFIPIQMFMAKLNSAFRRSAISVTDKRVQTMNEFLTCIKLIKMYAWEKSFMNTIHDIRKREKKLLEKAGYVQSGNSALAPIVSTIAIVSTFTCHIFLKRTLTAPVAFSVIAMFNVMKFSIAILPFSVKAVAEASVSLRRMKKILVAKSPPSYITQPEDPDTILLLANATLTWEQEINRKRGPSKTQDQRRHVFKKQRAELYSEQSLSDQGVASPERQSGSPKSVLHNISFVVRKGKVLGICGNVGSGKSSLISALLGQMQLQKGVVAASGPLAYVSQQAWIFHGNVRENILFGEKYNHQRYQHTVHVCGLQKDLNSLPYGDLTEIGERGVNLSGGQRQRISLARAVYANRQLYLLDDPLSAVDAHVGKHVFEECIKKTLKGKTVVLVTHQLQFLESCDEVILLEDGEICEKGTHKELMEERGRYAKLIHNLRGLQFKDPEHIYNVAMVETLKESQAQRDEDAVLASGDERDEGKEPETEEFVDIKAPVHQLIQIESPQEGIVTWKTYHTYIKASGGYLVSFLVLCLFFLMMGSSAFSTWWLGLWLDSGSQVICAPQSNETACNVNQTLQDTKHHMYQLVYIASMMSVLTFGIIKGFTFTNTTLMASSSLHNRVFNKIVSSPMSFFDTTPTGRLMNRFSKDMDELDVRLPFHAENFLQQFSMVVFILVIMAASFPVVLVVLAGLAILFFILLRIFHRGVQELKQVENISRSPWFSHITSSMQGLGVIHAYDKKDDCISKFKALNDENSSHLLYFNCALRWFALRMDILMNIVTFVVALLVTLSFSSISASSKGLSLSYIIQLSGLLQVCVRTGTETQAKFTSAELMREYISTCVPEHTQSFKVGTCPKDWPSRGEITFKDYRMRYRDNTPLVLDGLNLNIQSGQTVGIVGRTGSGKSSLGMALFRLVEPASGTIFIDEVDICTVGLEELRTKLTMIPQDPVLFVGTVRYNLDPLGSHTDEMLWHVLERTFMRDTIMKLPEKLQAEVTENGENFSVGERQLLCMARALLRNSKIILLDEATASMDSKTDTLVQSTIKEAFKSCTVLTIAHRLNTVLNCDLVLVMENGKVIEFDKPEVLAEKPDSAFAMLLAAEVGL</sequence>
<comment type="function">
    <text evidence="2">Probable transporter, its substrate specificity is unknown.</text>
</comment>
<comment type="subcellular location">
    <subcellularLocation>
        <location evidence="2">Endoplasmic reticulum membrane</location>
        <topology evidence="3">Multi-pass membrane protein</topology>
    </subcellularLocation>
    <text evidence="1">Localizes to the midpiece of the sperm tail.</text>
</comment>
<comment type="alternative products">
    <event type="alternative splicing"/>
    <isoform>
        <id>Q6Y306-1</id>
        <name>1</name>
        <sequence type="displayed"/>
    </isoform>
    <isoform>
        <id>Q6Y306-2</id>
        <name>2</name>
        <name>A</name>
        <sequence type="described" ref="VSP_021099"/>
    </isoform>
</comment>
<comment type="tissue specificity">
    <text evidence="7">High expressed in testis.</text>
</comment>
<comment type="similarity">
    <text evidence="9">Belongs to the ABC transporter superfamily. ABCC family. Conjugate transporter (TC 3.A.1.208) subfamily.</text>
</comment>
<comment type="caution">
    <text evidence="2">Does not transport any of the organic anions transported by the other multidrug resistance-associated proteins (MRPs) in vesicular transport assays, nor does it confer resistance to cytotoxic agents in intact cell assays.</text>
</comment>
<keyword id="KW-0025">Alternative splicing</keyword>
<keyword id="KW-0067">ATP-binding</keyword>
<keyword id="KW-0256">Endoplasmic reticulum</keyword>
<keyword id="KW-0325">Glycoprotein</keyword>
<keyword id="KW-0472">Membrane</keyword>
<keyword id="KW-0547">Nucleotide-binding</keyword>
<keyword id="KW-1185">Reference proteome</keyword>
<keyword id="KW-0677">Repeat</keyword>
<keyword id="KW-0812">Transmembrane</keyword>
<keyword id="KW-1133">Transmembrane helix</keyword>
<keyword id="KW-0813">Transport</keyword>
<organism>
    <name type="scientific">Rattus norvegicus</name>
    <name type="common">Rat</name>
    <dbReference type="NCBI Taxonomy" id="10116"/>
    <lineage>
        <taxon>Eukaryota</taxon>
        <taxon>Metazoa</taxon>
        <taxon>Chordata</taxon>
        <taxon>Craniata</taxon>
        <taxon>Vertebrata</taxon>
        <taxon>Euteleostomi</taxon>
        <taxon>Mammalia</taxon>
        <taxon>Eutheria</taxon>
        <taxon>Euarchontoglires</taxon>
        <taxon>Glires</taxon>
        <taxon>Rodentia</taxon>
        <taxon>Myomorpha</taxon>
        <taxon>Muroidea</taxon>
        <taxon>Muridae</taxon>
        <taxon>Murinae</taxon>
        <taxon>Rattus</taxon>
    </lineage>
</organism>
<gene>
    <name type="primary">Abcc12</name>
    <name type="synonym">Mrp9</name>
</gene>
<evidence type="ECO:0000250" key="1">
    <source>
        <dbReference type="UniProtKB" id="Q80WJ6"/>
    </source>
</evidence>
<evidence type="ECO:0000250" key="2">
    <source>
        <dbReference type="UniProtKB" id="Q96J65"/>
    </source>
</evidence>
<evidence type="ECO:0000255" key="3"/>
<evidence type="ECO:0000255" key="4">
    <source>
        <dbReference type="PROSITE-ProRule" id="PRU00434"/>
    </source>
</evidence>
<evidence type="ECO:0000255" key="5">
    <source>
        <dbReference type="PROSITE-ProRule" id="PRU00441"/>
    </source>
</evidence>
<evidence type="ECO:0000256" key="6">
    <source>
        <dbReference type="SAM" id="MobiDB-lite"/>
    </source>
</evidence>
<evidence type="ECO:0000269" key="7">
    <source>
    </source>
</evidence>
<evidence type="ECO:0000303" key="8">
    <source ref="1"/>
</evidence>
<evidence type="ECO:0000305" key="9"/>